<dbReference type="EMBL" id="CP000447">
    <property type="protein sequence ID" value="ABI70850.1"/>
    <property type="molecule type" value="Genomic_DNA"/>
</dbReference>
<dbReference type="RefSeq" id="WP_011636471.1">
    <property type="nucleotide sequence ID" value="NC_008345.1"/>
</dbReference>
<dbReference type="SMR" id="Q086G5"/>
<dbReference type="STRING" id="318167.Sfri_0997"/>
<dbReference type="KEGG" id="sfr:Sfri_0997"/>
<dbReference type="eggNOG" id="COG4108">
    <property type="taxonomic scope" value="Bacteria"/>
</dbReference>
<dbReference type="HOGENOM" id="CLU_002794_2_1_6"/>
<dbReference type="OrthoDB" id="9804431at2"/>
<dbReference type="Proteomes" id="UP000000684">
    <property type="component" value="Chromosome"/>
</dbReference>
<dbReference type="GO" id="GO:0005829">
    <property type="term" value="C:cytosol"/>
    <property type="evidence" value="ECO:0007669"/>
    <property type="project" value="TreeGrafter"/>
</dbReference>
<dbReference type="GO" id="GO:0005525">
    <property type="term" value="F:GTP binding"/>
    <property type="evidence" value="ECO:0007669"/>
    <property type="project" value="UniProtKB-UniRule"/>
</dbReference>
<dbReference type="GO" id="GO:0003924">
    <property type="term" value="F:GTPase activity"/>
    <property type="evidence" value="ECO:0007669"/>
    <property type="project" value="InterPro"/>
</dbReference>
<dbReference type="GO" id="GO:0097216">
    <property type="term" value="F:guanosine tetraphosphate binding"/>
    <property type="evidence" value="ECO:0007669"/>
    <property type="project" value="UniProtKB-ARBA"/>
</dbReference>
<dbReference type="GO" id="GO:0016150">
    <property type="term" value="F:translation release factor activity, codon nonspecific"/>
    <property type="evidence" value="ECO:0007669"/>
    <property type="project" value="TreeGrafter"/>
</dbReference>
<dbReference type="GO" id="GO:0016149">
    <property type="term" value="F:translation release factor activity, codon specific"/>
    <property type="evidence" value="ECO:0007669"/>
    <property type="project" value="UniProtKB-UniRule"/>
</dbReference>
<dbReference type="GO" id="GO:0006449">
    <property type="term" value="P:regulation of translational termination"/>
    <property type="evidence" value="ECO:0007669"/>
    <property type="project" value="UniProtKB-UniRule"/>
</dbReference>
<dbReference type="CDD" id="cd04169">
    <property type="entry name" value="RF3"/>
    <property type="match status" value="1"/>
</dbReference>
<dbReference type="CDD" id="cd03689">
    <property type="entry name" value="RF3_II"/>
    <property type="match status" value="1"/>
</dbReference>
<dbReference type="CDD" id="cd16259">
    <property type="entry name" value="RF3_III"/>
    <property type="match status" value="1"/>
</dbReference>
<dbReference type="FunFam" id="2.40.30.10:FF:000040">
    <property type="entry name" value="Peptide chain release factor 3"/>
    <property type="match status" value="1"/>
</dbReference>
<dbReference type="FunFam" id="3.30.70.3280:FF:000001">
    <property type="entry name" value="Peptide chain release factor 3"/>
    <property type="match status" value="1"/>
</dbReference>
<dbReference type="FunFam" id="3.40.50.300:FF:000542">
    <property type="entry name" value="Peptide chain release factor 3"/>
    <property type="match status" value="1"/>
</dbReference>
<dbReference type="Gene3D" id="3.40.50.300">
    <property type="entry name" value="P-loop containing nucleotide triphosphate hydrolases"/>
    <property type="match status" value="2"/>
</dbReference>
<dbReference type="Gene3D" id="3.30.70.3280">
    <property type="entry name" value="Peptide chain release factor 3, domain III"/>
    <property type="match status" value="1"/>
</dbReference>
<dbReference type="HAMAP" id="MF_00072">
    <property type="entry name" value="Rel_fac_3"/>
    <property type="match status" value="1"/>
</dbReference>
<dbReference type="InterPro" id="IPR053905">
    <property type="entry name" value="EF-G-like_DII"/>
</dbReference>
<dbReference type="InterPro" id="IPR035647">
    <property type="entry name" value="EFG_III/V"/>
</dbReference>
<dbReference type="InterPro" id="IPR031157">
    <property type="entry name" value="G_TR_CS"/>
</dbReference>
<dbReference type="InterPro" id="IPR027417">
    <property type="entry name" value="P-loop_NTPase"/>
</dbReference>
<dbReference type="InterPro" id="IPR004548">
    <property type="entry name" value="PrfC"/>
</dbReference>
<dbReference type="InterPro" id="IPR032090">
    <property type="entry name" value="RF3_C"/>
</dbReference>
<dbReference type="InterPro" id="IPR038467">
    <property type="entry name" value="RF3_dom_3_sf"/>
</dbReference>
<dbReference type="InterPro" id="IPR041732">
    <property type="entry name" value="RF3_GTP-bd"/>
</dbReference>
<dbReference type="InterPro" id="IPR005225">
    <property type="entry name" value="Small_GTP-bd"/>
</dbReference>
<dbReference type="InterPro" id="IPR000795">
    <property type="entry name" value="T_Tr_GTP-bd_dom"/>
</dbReference>
<dbReference type="InterPro" id="IPR009000">
    <property type="entry name" value="Transl_B-barrel_sf"/>
</dbReference>
<dbReference type="NCBIfam" id="TIGR00503">
    <property type="entry name" value="prfC"/>
    <property type="match status" value="1"/>
</dbReference>
<dbReference type="NCBIfam" id="NF001964">
    <property type="entry name" value="PRK00741.1"/>
    <property type="match status" value="1"/>
</dbReference>
<dbReference type="NCBIfam" id="TIGR00231">
    <property type="entry name" value="small_GTP"/>
    <property type="match status" value="1"/>
</dbReference>
<dbReference type="PANTHER" id="PTHR43556">
    <property type="entry name" value="PEPTIDE CHAIN RELEASE FACTOR RF3"/>
    <property type="match status" value="1"/>
</dbReference>
<dbReference type="PANTHER" id="PTHR43556:SF2">
    <property type="entry name" value="PEPTIDE CHAIN RELEASE FACTOR RF3"/>
    <property type="match status" value="1"/>
</dbReference>
<dbReference type="Pfam" id="PF22042">
    <property type="entry name" value="EF-G_D2"/>
    <property type="match status" value="1"/>
</dbReference>
<dbReference type="Pfam" id="PF00009">
    <property type="entry name" value="GTP_EFTU"/>
    <property type="match status" value="1"/>
</dbReference>
<dbReference type="Pfam" id="PF16658">
    <property type="entry name" value="RF3_C"/>
    <property type="match status" value="1"/>
</dbReference>
<dbReference type="PRINTS" id="PR00315">
    <property type="entry name" value="ELONGATNFCT"/>
</dbReference>
<dbReference type="SUPFAM" id="SSF54980">
    <property type="entry name" value="EF-G C-terminal domain-like"/>
    <property type="match status" value="1"/>
</dbReference>
<dbReference type="SUPFAM" id="SSF52540">
    <property type="entry name" value="P-loop containing nucleoside triphosphate hydrolases"/>
    <property type="match status" value="1"/>
</dbReference>
<dbReference type="SUPFAM" id="SSF50447">
    <property type="entry name" value="Translation proteins"/>
    <property type="match status" value="1"/>
</dbReference>
<dbReference type="PROSITE" id="PS00301">
    <property type="entry name" value="G_TR_1"/>
    <property type="match status" value="1"/>
</dbReference>
<dbReference type="PROSITE" id="PS51722">
    <property type="entry name" value="G_TR_2"/>
    <property type="match status" value="1"/>
</dbReference>
<keyword id="KW-0963">Cytoplasm</keyword>
<keyword id="KW-0342">GTP-binding</keyword>
<keyword id="KW-0547">Nucleotide-binding</keyword>
<keyword id="KW-0648">Protein biosynthesis</keyword>
<keyword id="KW-1185">Reference proteome</keyword>
<protein>
    <recommendedName>
        <fullName evidence="1">Peptide chain release factor 3</fullName>
        <shortName evidence="1">RF-3</shortName>
    </recommendedName>
</protein>
<comment type="function">
    <text evidence="1">Increases the formation of ribosomal termination complexes and stimulates activities of RF-1 and RF-2. It binds guanine nucleotides and has strong preference for UGA stop codons. It may interact directly with the ribosome. The stimulation of RF-1 and RF-2 is significantly reduced by GTP and GDP, but not by GMP.</text>
</comment>
<comment type="subcellular location">
    <subcellularLocation>
        <location evidence="1">Cytoplasm</location>
    </subcellularLocation>
</comment>
<comment type="similarity">
    <text evidence="1">Belongs to the TRAFAC class translation factor GTPase superfamily. Classic translation factor GTPase family. PrfC subfamily.</text>
</comment>
<proteinExistence type="inferred from homology"/>
<sequence>MSGNKVEVDKRRTFAIISHPDAGKTTITEKVLLFGNALQKAGTVKGKKSGQHAKSDWMEMEKDRGISITTSVMQFPYGGALINLLDTPGHEDFSEDTYRTLTAVDSCLMVIDSAKGVEDRTIKLMEVTRLRDTPIVTFMNKCDRDIRDPIELMDEVEDILKIACAPITWPIGSGKEFKGVYHILRDEIILYQSGMGHTIQEERIIKGLHNPELDKVLGSYANEIRDEMELVAGASNEFNQEAFLKGELTPVYFGTALGNFGVDHILDGIVEWAPKPLPRESDVRNVTPDEEKFSGFIFKIQANMDPKHRDRVAFMRVCSGRYEQGMKMHHVRIGKDVNVSDALTFMAGDRSRAEAAYPGDIIGLHNHGTMRIGDTFTQGEKLRFTGVPNFAPEMFRRIRLKDPLKQKQLLKGLVQLSEEGAVQVFRPIDSNDLIVGAVGVLQFEVVVGRLKSEYNVEAIYEGISVSTARWVYCKDERKLEEFRRKCSQNLALDGGNNLTYIAPTMVNLNLSMERYPDVEFAKTREH</sequence>
<evidence type="ECO:0000255" key="1">
    <source>
        <dbReference type="HAMAP-Rule" id="MF_00072"/>
    </source>
</evidence>
<organism>
    <name type="scientific">Shewanella frigidimarina (strain NCIMB 400)</name>
    <dbReference type="NCBI Taxonomy" id="318167"/>
    <lineage>
        <taxon>Bacteria</taxon>
        <taxon>Pseudomonadati</taxon>
        <taxon>Pseudomonadota</taxon>
        <taxon>Gammaproteobacteria</taxon>
        <taxon>Alteromonadales</taxon>
        <taxon>Shewanellaceae</taxon>
        <taxon>Shewanella</taxon>
    </lineage>
</organism>
<accession>Q086G5</accession>
<name>RF3_SHEFN</name>
<gene>
    <name evidence="1" type="primary">prfC</name>
    <name type="ordered locus">Sfri_0997</name>
</gene>
<feature type="chain" id="PRO_1000023675" description="Peptide chain release factor 3">
    <location>
        <begin position="1"/>
        <end position="526"/>
    </location>
</feature>
<feature type="domain" description="tr-type G">
    <location>
        <begin position="9"/>
        <end position="277"/>
    </location>
</feature>
<feature type="binding site" evidence="1">
    <location>
        <begin position="18"/>
        <end position="25"/>
    </location>
    <ligand>
        <name>GTP</name>
        <dbReference type="ChEBI" id="CHEBI:37565"/>
    </ligand>
</feature>
<feature type="binding site" evidence="1">
    <location>
        <begin position="86"/>
        <end position="90"/>
    </location>
    <ligand>
        <name>GTP</name>
        <dbReference type="ChEBI" id="CHEBI:37565"/>
    </ligand>
</feature>
<feature type="binding site" evidence="1">
    <location>
        <begin position="140"/>
        <end position="143"/>
    </location>
    <ligand>
        <name>GTP</name>
        <dbReference type="ChEBI" id="CHEBI:37565"/>
    </ligand>
</feature>
<reference key="1">
    <citation type="submission" date="2006-08" db="EMBL/GenBank/DDBJ databases">
        <title>Complete sequence of Shewanella frigidimarina NCIMB 400.</title>
        <authorList>
            <consortium name="US DOE Joint Genome Institute"/>
            <person name="Copeland A."/>
            <person name="Lucas S."/>
            <person name="Lapidus A."/>
            <person name="Barry K."/>
            <person name="Detter J.C."/>
            <person name="Glavina del Rio T."/>
            <person name="Hammon N."/>
            <person name="Israni S."/>
            <person name="Dalin E."/>
            <person name="Tice H."/>
            <person name="Pitluck S."/>
            <person name="Fredrickson J.K."/>
            <person name="Kolker E."/>
            <person name="McCuel L.A."/>
            <person name="DiChristina T."/>
            <person name="Nealson K.H."/>
            <person name="Newman D."/>
            <person name="Tiedje J.M."/>
            <person name="Zhou J."/>
            <person name="Romine M.F."/>
            <person name="Culley D.E."/>
            <person name="Serres M."/>
            <person name="Chertkov O."/>
            <person name="Brettin T."/>
            <person name="Bruce D."/>
            <person name="Han C."/>
            <person name="Tapia R."/>
            <person name="Gilna P."/>
            <person name="Schmutz J."/>
            <person name="Larimer F."/>
            <person name="Land M."/>
            <person name="Hauser L."/>
            <person name="Kyrpides N."/>
            <person name="Mikhailova N."/>
            <person name="Richardson P."/>
        </authorList>
    </citation>
    <scope>NUCLEOTIDE SEQUENCE [LARGE SCALE GENOMIC DNA]</scope>
    <source>
        <strain>NCIMB 400</strain>
    </source>
</reference>